<feature type="chain" id="PRO_0000435752" description="Secondary metabolism regulator laeA">
    <location>
        <begin position="1"/>
        <end position="316"/>
    </location>
</feature>
<dbReference type="EC" id="2.1.1.-" evidence="1"/>
<dbReference type="EMBL" id="DS231696">
    <property type="protein sequence ID" value="KNA95390.1"/>
    <property type="molecule type" value="Genomic_DNA"/>
</dbReference>
<dbReference type="EMBL" id="DS231696">
    <property type="protein sequence ID" value="KNA95386.1"/>
    <property type="status" value="ALT_SEQ"/>
    <property type="molecule type" value="Genomic_DNA"/>
</dbReference>
<dbReference type="EMBL" id="DS231696">
    <property type="protein sequence ID" value="KNA95387.1"/>
    <property type="status" value="ALT_SEQ"/>
    <property type="molecule type" value="Genomic_DNA"/>
</dbReference>
<dbReference type="EMBL" id="DS231696">
    <property type="protein sequence ID" value="KNA95389.1"/>
    <property type="status" value="ALT_SEQ"/>
    <property type="molecule type" value="Genomic_DNA"/>
</dbReference>
<dbReference type="EMBL" id="DS231696">
    <property type="protein sequence ID" value="KNA95388.1"/>
    <property type="status" value="ALT_SEQ"/>
    <property type="molecule type" value="Genomic_DNA"/>
</dbReference>
<dbReference type="RefSeq" id="XP_018233432.1">
    <property type="nucleotide sequence ID" value="XM_018377671.1"/>
</dbReference>
<dbReference type="RefSeq" id="XP_018233433.1">
    <property type="nucleotide sequence ID" value="XM_018377672.1"/>
</dbReference>
<dbReference type="RefSeq" id="XP_018233434.1">
    <property type="nucleotide sequence ID" value="XM_018377673.1"/>
</dbReference>
<dbReference type="RefSeq" id="XP_018233435.1">
    <property type="nucleotide sequence ID" value="XM_018377674.1"/>
</dbReference>
<dbReference type="RefSeq" id="XP_018233436.1">
    <property type="nucleotide sequence ID" value="XM_018377675.1"/>
</dbReference>
<dbReference type="SMR" id="A0A0J9UBD6"/>
<dbReference type="STRING" id="426428.A0A0J9UBD6"/>
<dbReference type="GeneID" id="28943257"/>
<dbReference type="KEGG" id="fox:FOXG_00975"/>
<dbReference type="VEuPathDB" id="FungiDB:FOXG_00975"/>
<dbReference type="OrthoDB" id="117534at110618"/>
<dbReference type="Proteomes" id="UP000009097">
    <property type="component" value="Unassembled WGS sequence"/>
</dbReference>
<dbReference type="GO" id="GO:0005634">
    <property type="term" value="C:nucleus"/>
    <property type="evidence" value="ECO:0007669"/>
    <property type="project" value="UniProtKB-SubCell"/>
</dbReference>
<dbReference type="GO" id="GO:0008168">
    <property type="term" value="F:methyltransferase activity"/>
    <property type="evidence" value="ECO:0007669"/>
    <property type="project" value="UniProtKB-KW"/>
</dbReference>
<dbReference type="GO" id="GO:0032259">
    <property type="term" value="P:methylation"/>
    <property type="evidence" value="ECO:0007669"/>
    <property type="project" value="UniProtKB-KW"/>
</dbReference>
<dbReference type="GO" id="GO:0030435">
    <property type="term" value="P:sporulation resulting in formation of a cellular spore"/>
    <property type="evidence" value="ECO:0007669"/>
    <property type="project" value="UniProtKB-KW"/>
</dbReference>
<dbReference type="CDD" id="cd02440">
    <property type="entry name" value="AdoMet_MTases"/>
    <property type="match status" value="1"/>
</dbReference>
<dbReference type="Gene3D" id="3.40.50.150">
    <property type="entry name" value="Vaccinia Virus protein VP39"/>
    <property type="match status" value="1"/>
</dbReference>
<dbReference type="InterPro" id="IPR029063">
    <property type="entry name" value="SAM-dependent_MTases_sf"/>
</dbReference>
<dbReference type="Pfam" id="PF13489">
    <property type="entry name" value="Methyltransf_23"/>
    <property type="match status" value="1"/>
</dbReference>
<dbReference type="SUPFAM" id="SSF53335">
    <property type="entry name" value="S-adenosyl-L-methionine-dependent methyltransferases"/>
    <property type="match status" value="1"/>
</dbReference>
<organism>
    <name type="scientific">Fusarium oxysporum f. sp. lycopersici (strain 4287 / CBS 123668 / FGSC 9935 / NRRL 34936)</name>
    <name type="common">Fusarium vascular wilt of tomato</name>
    <dbReference type="NCBI Taxonomy" id="426428"/>
    <lineage>
        <taxon>Eukaryota</taxon>
        <taxon>Fungi</taxon>
        <taxon>Dikarya</taxon>
        <taxon>Ascomycota</taxon>
        <taxon>Pezizomycotina</taxon>
        <taxon>Sordariomycetes</taxon>
        <taxon>Hypocreomycetidae</taxon>
        <taxon>Hypocreales</taxon>
        <taxon>Nectriaceae</taxon>
        <taxon>Fusarium</taxon>
        <taxon>Fusarium oxysporum species complex</taxon>
    </lineage>
</organism>
<evidence type="ECO:0000250" key="1">
    <source>
        <dbReference type="UniProtKB" id="C8VQG9"/>
    </source>
</evidence>
<evidence type="ECO:0000269" key="2">
    <source>
    </source>
</evidence>
<evidence type="ECO:0000269" key="3">
    <source>
    </source>
</evidence>
<evidence type="ECO:0000303" key="4">
    <source>
    </source>
</evidence>
<evidence type="ECO:0000305" key="5"/>
<reference key="1">
    <citation type="journal article" date="2010" name="Nature">
        <title>Comparative genomics reveals mobile pathogenicity chromosomes in Fusarium.</title>
        <authorList>
            <person name="Ma L.-J."/>
            <person name="van der Does H.C."/>
            <person name="Borkovich K.A."/>
            <person name="Coleman J.J."/>
            <person name="Daboussi M.-J."/>
            <person name="Di Pietro A."/>
            <person name="Dufresne M."/>
            <person name="Freitag M."/>
            <person name="Grabherr M."/>
            <person name="Henrissat B."/>
            <person name="Houterman P.M."/>
            <person name="Kang S."/>
            <person name="Shim W.-B."/>
            <person name="Woloshuk C."/>
            <person name="Xie X."/>
            <person name="Xu J.-R."/>
            <person name="Antoniw J."/>
            <person name="Baker S.E."/>
            <person name="Bluhm B.H."/>
            <person name="Breakspear A."/>
            <person name="Brown D.W."/>
            <person name="Butchko R.A.E."/>
            <person name="Chapman S."/>
            <person name="Coulson R."/>
            <person name="Coutinho P.M."/>
            <person name="Danchin E.G.J."/>
            <person name="Diener A."/>
            <person name="Gale L.R."/>
            <person name="Gardiner D.M."/>
            <person name="Goff S."/>
            <person name="Hammond-Kosack K.E."/>
            <person name="Hilburn K."/>
            <person name="Hua-Van A."/>
            <person name="Jonkers W."/>
            <person name="Kazan K."/>
            <person name="Kodira C.D."/>
            <person name="Koehrsen M."/>
            <person name="Kumar L."/>
            <person name="Lee Y.-H."/>
            <person name="Li L."/>
            <person name="Manners J.M."/>
            <person name="Miranda-Saavedra D."/>
            <person name="Mukherjee M."/>
            <person name="Park G."/>
            <person name="Park J."/>
            <person name="Park S.-Y."/>
            <person name="Proctor R.H."/>
            <person name="Regev A."/>
            <person name="Ruiz-Roldan M.C."/>
            <person name="Sain D."/>
            <person name="Sakthikumar S."/>
            <person name="Sykes S."/>
            <person name="Schwartz D.C."/>
            <person name="Turgeon B.G."/>
            <person name="Wapinski I."/>
            <person name="Yoder O."/>
            <person name="Young S."/>
            <person name="Zeng Q."/>
            <person name="Zhou S."/>
            <person name="Galagan J."/>
            <person name="Cuomo C.A."/>
            <person name="Kistler H.C."/>
            <person name="Rep M."/>
        </authorList>
    </citation>
    <scope>NUCLEOTIDE SEQUENCE [LARGE SCALE GENOMIC DNA]</scope>
    <source>
        <strain>4287 / CBS 123668 / FGSC 9935 / NRRL 34936</strain>
    </source>
</reference>
<reference key="2">
    <citation type="submission" date="2015-03" db="UniProtKB">
        <authorList>
            <consortium name="EnsemblFungi"/>
        </authorList>
    </citation>
    <scope>IDENTIFICATION</scope>
    <source>
        <strain>4287 / CBS 123668 / FGSC 9935 / NRRL 34936</strain>
    </source>
</reference>
<reference key="3">
    <citation type="journal article" date="2013" name="Mol. Microbiol.">
        <title>The velvet complex governs mycotoxin production and virulence of Fusarium oxysporum on plant and mammalian hosts.</title>
        <authorList>
            <person name="Lopez-Berges M.S."/>
            <person name="Hera C."/>
            <person name="Sulyok M."/>
            <person name="Schaefer K."/>
            <person name="Capilla J."/>
            <person name="Guarro J."/>
            <person name="Di Pietro A."/>
        </authorList>
    </citation>
    <scope>IDENTIFICATION IN THE VELVET COMPLEX</scope>
    <scope>FUNCTION</scope>
    <scope>DISRUPTION PHENOTYPE</scope>
</reference>
<reference key="4">
    <citation type="journal article" date="2014" name="Fungal Genet. Biol.">
        <title>Combinatorial function of velvet and AreA in transcriptional regulation of nitrate utilization and secondary metabolism.</title>
        <authorList>
            <person name="Lopez-Berges M.S."/>
            <person name="Schaefer K."/>
            <person name="Hera C."/>
            <person name="Di Pietro A."/>
        </authorList>
    </citation>
    <scope>FUNCTION</scope>
    <scope>DISRUPTION PHENOTYPE</scope>
</reference>
<proteinExistence type="evidence at protein level"/>
<accession>A0A0J9UBD6</accession>
<accession>A0A0D2XAQ9</accession>
<accession>A0A0J9U886</accession>
<accession>A0A0J9U8U0</accession>
<accession>A0A0J9WGP4</accession>
<gene>
    <name evidence="4" type="primary">laeA</name>
    <name type="ORF">FOXG_00975</name>
</gene>
<comment type="function">
    <text evidence="1 2 3">Methyltransferase that performs automethylation (By similarity). No other methyl-accepting substrate has been identified yet (By similarity). Component of the velvet transcription factor complex that acts as a global regulator for secondary metabolite gene expression (PubMed:23106229). Controls the biosynthetic gene cluster for beauvericin, a depsipeptide mycotoxin that functions as a virulence determinant (PubMed:23106229). The velvet complex also regulates chromatin structure and transcription of siderophore biosynthetic genes and is required for infection of tomato plants (PubMed:23106229). The velvet complex also governs expression of nitrate metabolism genes (PubMed:24240057).</text>
</comment>
<comment type="catalytic activity">
    <reaction evidence="1">
        <text>L-methionyl-[protein] + S-adenosyl-L-methionine = S-methyl-L-methionyl-[protein] + S-adenosyl-L-homocysteine</text>
        <dbReference type="Rhea" id="RHEA:60560"/>
        <dbReference type="Rhea" id="RHEA-COMP:12313"/>
        <dbReference type="Rhea" id="RHEA-COMP:15592"/>
        <dbReference type="ChEBI" id="CHEBI:16044"/>
        <dbReference type="ChEBI" id="CHEBI:57856"/>
        <dbReference type="ChEBI" id="CHEBI:59789"/>
        <dbReference type="ChEBI" id="CHEBI:142742"/>
    </reaction>
    <physiologicalReaction direction="left-to-right" evidence="1">
        <dbReference type="Rhea" id="RHEA:60561"/>
    </physiologicalReaction>
</comment>
<comment type="subunit">
    <text evidence="2">Component of the heterotrimeric velvet complex composed of laeA, veA and velB; VeA acting as a bridging protein between laeA and velB (PubMed:23106229).</text>
</comment>
<comment type="subcellular location">
    <subcellularLocation>
        <location evidence="1">Nucleus</location>
    </subcellularLocation>
</comment>
<comment type="disruption phenotype">
    <text evidence="2 3">Impairs production of beauvericin and attenuates virulence during infection of tomato plants (PubMed:23106229). Impairs also growth on the non-preferred nitrogen sources nitrate and nitrite (PubMed:24240057).</text>
</comment>
<comment type="similarity">
    <text evidence="5">Belongs to the methyltransferase superfamily. LaeA methyltransferase family.</text>
</comment>
<comment type="sequence caution" evidence="5">
    <conflict type="erroneous gene model prediction">
        <sequence resource="EMBL-CDS" id="KNA95386"/>
    </conflict>
</comment>
<comment type="sequence caution" evidence="5">
    <conflict type="erroneous gene model prediction">
        <sequence resource="EMBL-CDS" id="KNA95387"/>
    </conflict>
</comment>
<comment type="sequence caution" evidence="5">
    <conflict type="erroneous gene model prediction">
        <sequence resource="EMBL-CDS" id="KNA95388"/>
    </conflict>
</comment>
<comment type="sequence caution" evidence="5">
    <conflict type="erroneous gene model prediction">
        <sequence resource="EMBL-CDS" id="KNA95389"/>
    </conflict>
</comment>
<sequence>MVVMPPQNSVNESEGRYLQDGFWQHGRFYGSWKPGKYLFPIDSEELNRLDIFHKVFLLARDNKPFLAPIRRPSPRIMDIGTGTGIWAINVAEECLSDAQIMAVDLNQIQPALIPPGFMPKQYDIEEPSWGPLLTDCDLIHMRMLLGSIQTDLWPQVYHNVFEHLTPGIGFFEHIEVDWIPRCDDDERPANSAFVKWAELFLDGMDRFNRSVRVTPQEHRQMLEAAGFTDIRQEVIKAYVCPWSADRNEREIARWFNIGLSHSLEAMSLKPLIEKLGFEAEEVRELCERAKRETCVLRYHTYCNIHVWTARKPGPQQ</sequence>
<protein>
    <recommendedName>
        <fullName evidence="5">Secondary metabolism regulator laeA</fullName>
    </recommendedName>
    <alternativeName>
        <fullName evidence="5">Methyltransferase laeA</fullName>
        <ecNumber evidence="1">2.1.1.-</ecNumber>
    </alternativeName>
    <alternativeName>
        <fullName evidence="5">Velvet complex subunit laeA</fullName>
    </alternativeName>
</protein>
<keyword id="KW-0489">Methyltransferase</keyword>
<keyword id="KW-0539">Nucleus</keyword>
<keyword id="KW-1185">Reference proteome</keyword>
<keyword id="KW-0949">S-adenosyl-L-methionine</keyword>
<keyword id="KW-0749">Sporulation</keyword>
<keyword id="KW-0804">Transcription</keyword>
<keyword id="KW-0805">Transcription regulation</keyword>
<keyword id="KW-0808">Transferase</keyword>
<keyword id="KW-0843">Virulence</keyword>
<name>LAEA_FUSO4</name>